<organism>
    <name type="scientific">Staphylococcus aureus (strain USA300)</name>
    <dbReference type="NCBI Taxonomy" id="367830"/>
    <lineage>
        <taxon>Bacteria</taxon>
        <taxon>Bacillati</taxon>
        <taxon>Bacillota</taxon>
        <taxon>Bacilli</taxon>
        <taxon>Bacillales</taxon>
        <taxon>Staphylococcaceae</taxon>
        <taxon>Staphylococcus</taxon>
    </lineage>
</organism>
<dbReference type="EC" id="2.7.2.8" evidence="1"/>
<dbReference type="EMBL" id="CP000255">
    <property type="protein sequence ID" value="ABD22932.1"/>
    <property type="molecule type" value="Genomic_DNA"/>
</dbReference>
<dbReference type="RefSeq" id="WP_000668894.1">
    <property type="nucleotide sequence ID" value="NZ_CP027476.1"/>
</dbReference>
<dbReference type="SMR" id="Q2FK80"/>
<dbReference type="KEGG" id="saa:SAUSA300_0184"/>
<dbReference type="HOGENOM" id="CLU_053680_1_0_9"/>
<dbReference type="OMA" id="EGLYEDW"/>
<dbReference type="UniPathway" id="UPA00068">
    <property type="reaction ID" value="UER00107"/>
</dbReference>
<dbReference type="PHI-base" id="PHI:2633"/>
<dbReference type="Proteomes" id="UP000001939">
    <property type="component" value="Chromosome"/>
</dbReference>
<dbReference type="GO" id="GO:0005737">
    <property type="term" value="C:cytoplasm"/>
    <property type="evidence" value="ECO:0007669"/>
    <property type="project" value="UniProtKB-SubCell"/>
</dbReference>
<dbReference type="GO" id="GO:0003991">
    <property type="term" value="F:acetylglutamate kinase activity"/>
    <property type="evidence" value="ECO:0007669"/>
    <property type="project" value="UniProtKB-UniRule"/>
</dbReference>
<dbReference type="GO" id="GO:0005524">
    <property type="term" value="F:ATP binding"/>
    <property type="evidence" value="ECO:0007669"/>
    <property type="project" value="UniProtKB-UniRule"/>
</dbReference>
<dbReference type="GO" id="GO:0042450">
    <property type="term" value="P:arginine biosynthetic process via ornithine"/>
    <property type="evidence" value="ECO:0007669"/>
    <property type="project" value="UniProtKB-UniRule"/>
</dbReference>
<dbReference type="GO" id="GO:0006526">
    <property type="term" value="P:L-arginine biosynthetic process"/>
    <property type="evidence" value="ECO:0007669"/>
    <property type="project" value="UniProtKB-UniPathway"/>
</dbReference>
<dbReference type="CDD" id="cd04238">
    <property type="entry name" value="AAK_NAGK-like"/>
    <property type="match status" value="1"/>
</dbReference>
<dbReference type="FunFam" id="3.40.1160.10:FF:000037">
    <property type="entry name" value="Acetylglutamate kinase"/>
    <property type="match status" value="1"/>
</dbReference>
<dbReference type="Gene3D" id="3.40.1160.10">
    <property type="entry name" value="Acetylglutamate kinase-like"/>
    <property type="match status" value="1"/>
</dbReference>
<dbReference type="HAMAP" id="MF_00082">
    <property type="entry name" value="ArgB"/>
    <property type="match status" value="1"/>
</dbReference>
<dbReference type="InterPro" id="IPR036393">
    <property type="entry name" value="AceGlu_kinase-like_sf"/>
</dbReference>
<dbReference type="InterPro" id="IPR004662">
    <property type="entry name" value="AcgluKinase_fam"/>
</dbReference>
<dbReference type="InterPro" id="IPR037528">
    <property type="entry name" value="ArgB"/>
</dbReference>
<dbReference type="InterPro" id="IPR001048">
    <property type="entry name" value="Asp/Glu/Uridylate_kinase"/>
</dbReference>
<dbReference type="NCBIfam" id="TIGR00761">
    <property type="entry name" value="argB"/>
    <property type="match status" value="1"/>
</dbReference>
<dbReference type="PANTHER" id="PTHR23342">
    <property type="entry name" value="N-ACETYLGLUTAMATE SYNTHASE"/>
    <property type="match status" value="1"/>
</dbReference>
<dbReference type="PANTHER" id="PTHR23342:SF0">
    <property type="entry name" value="N-ACETYLGLUTAMATE SYNTHASE, MITOCHONDRIAL"/>
    <property type="match status" value="1"/>
</dbReference>
<dbReference type="Pfam" id="PF00696">
    <property type="entry name" value="AA_kinase"/>
    <property type="match status" value="1"/>
</dbReference>
<dbReference type="PIRSF" id="PIRSF000728">
    <property type="entry name" value="NAGK"/>
    <property type="match status" value="1"/>
</dbReference>
<dbReference type="SUPFAM" id="SSF53633">
    <property type="entry name" value="Carbamate kinase-like"/>
    <property type="match status" value="1"/>
</dbReference>
<sequence length="254" mass="27739">MKFIVIKIGGSTLSDMHPSIINNIKHLRSNNIYPIIVHGGGPFINEALSNQQIEPHFVNGLRVTDKATMTITKHTLIADVNTALVAQFNQHQCSAIGLCGLDAQLFEITSFDQQYGYVGVPTALNKDALQYLCTKFVPIINSIGFNNHDGEFYNINADTLAYFIASSLKAPIYVLSNIAGVLINDVVIPQLPLVDIHQYIEHGDIYGGMIPKVLDAKNAIENGCPKVIIASGNKPNIIESIYNNDFVGTTILNS</sequence>
<reference key="1">
    <citation type="journal article" date="2006" name="Lancet">
        <title>Complete genome sequence of USA300, an epidemic clone of community-acquired meticillin-resistant Staphylococcus aureus.</title>
        <authorList>
            <person name="Diep B.A."/>
            <person name="Gill S.R."/>
            <person name="Chang R.F."/>
            <person name="Phan T.H."/>
            <person name="Chen J.H."/>
            <person name="Davidson M.G."/>
            <person name="Lin F."/>
            <person name="Lin J."/>
            <person name="Carleton H.A."/>
            <person name="Mongodin E.F."/>
            <person name="Sensabaugh G.F."/>
            <person name="Perdreau-Remington F."/>
        </authorList>
    </citation>
    <scope>NUCLEOTIDE SEQUENCE [LARGE SCALE GENOMIC DNA]</scope>
    <source>
        <strain>USA300</strain>
    </source>
</reference>
<keyword id="KW-0028">Amino-acid biosynthesis</keyword>
<keyword id="KW-0055">Arginine biosynthesis</keyword>
<keyword id="KW-0067">ATP-binding</keyword>
<keyword id="KW-0963">Cytoplasm</keyword>
<keyword id="KW-0418">Kinase</keyword>
<keyword id="KW-0547">Nucleotide-binding</keyword>
<keyword id="KW-0808">Transferase</keyword>
<name>ARGB_STAA3</name>
<protein>
    <recommendedName>
        <fullName evidence="1">Acetylglutamate kinase</fullName>
        <ecNumber evidence="1">2.7.2.8</ecNumber>
    </recommendedName>
    <alternativeName>
        <fullName evidence="1">N-acetyl-L-glutamate 5-phosphotransferase</fullName>
    </alternativeName>
    <alternativeName>
        <fullName evidence="1">NAG kinase</fullName>
        <shortName evidence="1">NAGK</shortName>
    </alternativeName>
</protein>
<proteinExistence type="inferred from homology"/>
<comment type="function">
    <text evidence="1">Catalyzes the ATP-dependent phosphorylation of N-acetyl-L-glutamate.</text>
</comment>
<comment type="catalytic activity">
    <reaction evidence="1">
        <text>N-acetyl-L-glutamate + ATP = N-acetyl-L-glutamyl 5-phosphate + ADP</text>
        <dbReference type="Rhea" id="RHEA:14629"/>
        <dbReference type="ChEBI" id="CHEBI:30616"/>
        <dbReference type="ChEBI" id="CHEBI:44337"/>
        <dbReference type="ChEBI" id="CHEBI:57936"/>
        <dbReference type="ChEBI" id="CHEBI:456216"/>
        <dbReference type="EC" id="2.7.2.8"/>
    </reaction>
</comment>
<comment type="pathway">
    <text evidence="1">Amino-acid biosynthesis; L-arginine biosynthesis; N(2)-acetyl-L-ornithine from L-glutamate: step 2/4.</text>
</comment>
<comment type="subcellular location">
    <subcellularLocation>
        <location evidence="1">Cytoplasm</location>
    </subcellularLocation>
</comment>
<comment type="similarity">
    <text evidence="1">Belongs to the acetylglutamate kinase family. ArgB subfamily.</text>
</comment>
<feature type="chain" id="PRO_0000264767" description="Acetylglutamate kinase">
    <location>
        <begin position="1"/>
        <end position="254"/>
    </location>
</feature>
<feature type="binding site" evidence="1">
    <location>
        <begin position="40"/>
        <end position="41"/>
    </location>
    <ligand>
        <name>substrate</name>
    </ligand>
</feature>
<feature type="binding site" evidence="1">
    <location>
        <position position="62"/>
    </location>
    <ligand>
        <name>substrate</name>
    </ligand>
</feature>
<feature type="binding site" evidence="1">
    <location>
        <position position="154"/>
    </location>
    <ligand>
        <name>substrate</name>
    </ligand>
</feature>
<feature type="site" description="Transition state stabilizer" evidence="1">
    <location>
        <position position="7"/>
    </location>
</feature>
<feature type="site" description="Transition state stabilizer" evidence="1">
    <location>
        <position position="212"/>
    </location>
</feature>
<accession>Q2FK80</accession>
<evidence type="ECO:0000255" key="1">
    <source>
        <dbReference type="HAMAP-Rule" id="MF_00082"/>
    </source>
</evidence>
<gene>
    <name evidence="1" type="primary">argB</name>
    <name type="ordered locus">SAUSA300_0184</name>
</gene>